<gene>
    <name type="primary">ctnnbl1</name>
    <name type="ORF">SPAC1952.06c</name>
</gene>
<proteinExistence type="evidence at protein level"/>
<name>CTBL1_SCHPO</name>
<organism>
    <name type="scientific">Schizosaccharomyces pombe (strain 972 / ATCC 24843)</name>
    <name type="common">Fission yeast</name>
    <dbReference type="NCBI Taxonomy" id="284812"/>
    <lineage>
        <taxon>Eukaryota</taxon>
        <taxon>Fungi</taxon>
        <taxon>Dikarya</taxon>
        <taxon>Ascomycota</taxon>
        <taxon>Taphrinomycotina</taxon>
        <taxon>Schizosaccharomycetes</taxon>
        <taxon>Schizosaccharomycetales</taxon>
        <taxon>Schizosaccharomycetaceae</taxon>
        <taxon>Schizosaccharomyces</taxon>
    </lineage>
</organism>
<dbReference type="EMBL" id="CU329670">
    <property type="protein sequence ID" value="CAB52570.1"/>
    <property type="molecule type" value="Genomic_DNA"/>
</dbReference>
<dbReference type="PIR" id="T37934">
    <property type="entry name" value="T37934"/>
</dbReference>
<dbReference type="RefSeq" id="NP_594808.1">
    <property type="nucleotide sequence ID" value="NM_001020237.2"/>
</dbReference>
<dbReference type="SMR" id="Q9UUK1"/>
<dbReference type="BioGRID" id="279012">
    <property type="interactions" value="309"/>
</dbReference>
<dbReference type="FunCoup" id="Q9UUK1">
    <property type="interactions" value="771"/>
</dbReference>
<dbReference type="STRING" id="284812.Q9UUK1"/>
<dbReference type="iPTMnet" id="Q9UUK1"/>
<dbReference type="SwissPalm" id="Q9UUK1"/>
<dbReference type="PaxDb" id="4896-SPAC1952.06c.1"/>
<dbReference type="EnsemblFungi" id="SPAC1952.06c.1">
    <property type="protein sequence ID" value="SPAC1952.06c.1:pep"/>
    <property type="gene ID" value="SPAC1952.06c"/>
</dbReference>
<dbReference type="KEGG" id="spo:2542555"/>
<dbReference type="PomBase" id="SPAC1952.06c"/>
<dbReference type="VEuPathDB" id="FungiDB:SPAC1952.06c"/>
<dbReference type="eggNOG" id="KOG2734">
    <property type="taxonomic scope" value="Eukaryota"/>
</dbReference>
<dbReference type="HOGENOM" id="CLU_017098_0_0_1"/>
<dbReference type="InParanoid" id="Q9UUK1"/>
<dbReference type="OMA" id="TDWREQE"/>
<dbReference type="PhylomeDB" id="Q9UUK1"/>
<dbReference type="Reactome" id="R-SPO-72163">
    <property type="pathway name" value="mRNA Splicing - Major Pathway"/>
</dbReference>
<dbReference type="PRO" id="PR:Q9UUK1"/>
<dbReference type="Proteomes" id="UP000002485">
    <property type="component" value="Chromosome I"/>
</dbReference>
<dbReference type="GO" id="GO:0005634">
    <property type="term" value="C:nucleus"/>
    <property type="evidence" value="ECO:0007005"/>
    <property type="project" value="PomBase"/>
</dbReference>
<dbReference type="GO" id="GO:0005681">
    <property type="term" value="C:spliceosomal complex"/>
    <property type="evidence" value="ECO:0000318"/>
    <property type="project" value="GO_Central"/>
</dbReference>
<dbReference type="GO" id="GO:0045292">
    <property type="term" value="P:mRNA cis splicing, via spliceosome"/>
    <property type="evidence" value="ECO:0000305"/>
    <property type="project" value="PomBase"/>
</dbReference>
<dbReference type="FunFam" id="1.25.10.10:FF:001136">
    <property type="entry name" value="Beta-catenin-like protein 1"/>
    <property type="match status" value="1"/>
</dbReference>
<dbReference type="Gene3D" id="1.25.10.10">
    <property type="entry name" value="Leucine-rich Repeat Variant"/>
    <property type="match status" value="1"/>
</dbReference>
<dbReference type="InterPro" id="IPR011989">
    <property type="entry name" value="ARM-like"/>
</dbReference>
<dbReference type="InterPro" id="IPR016024">
    <property type="entry name" value="ARM-type_fold"/>
</dbReference>
<dbReference type="InterPro" id="IPR039678">
    <property type="entry name" value="CTNNBL1"/>
</dbReference>
<dbReference type="InterPro" id="IPR013180">
    <property type="entry name" value="CTNNBL1_N"/>
</dbReference>
<dbReference type="PANTHER" id="PTHR14978:SF0">
    <property type="entry name" value="BETA-CATENIN-LIKE PROTEIN 1"/>
    <property type="match status" value="1"/>
</dbReference>
<dbReference type="PANTHER" id="PTHR14978">
    <property type="entry name" value="BETA-CATENIN-LIKE PROTEIN 1 NUCLEAR ASSOCIATED PROTEIN"/>
    <property type="match status" value="1"/>
</dbReference>
<dbReference type="Pfam" id="PF08216">
    <property type="entry name" value="CTNNBL"/>
    <property type="match status" value="1"/>
</dbReference>
<dbReference type="SMART" id="SM01156">
    <property type="entry name" value="DUF1716"/>
    <property type="match status" value="1"/>
</dbReference>
<dbReference type="SUPFAM" id="SSF48371">
    <property type="entry name" value="ARM repeat"/>
    <property type="match status" value="1"/>
</dbReference>
<accession>Q9UUK1</accession>
<evidence type="ECO:0000250" key="1"/>
<evidence type="ECO:0000256" key="2">
    <source>
        <dbReference type="SAM" id="MobiDB-lite"/>
    </source>
</evidence>
<evidence type="ECO:0000269" key="3">
    <source>
    </source>
</evidence>
<evidence type="ECO:0000269" key="4">
    <source>
    </source>
</evidence>
<feature type="chain" id="PRO_0000372369" description="Beta-catenin-like protein 1 homolog">
    <location>
        <begin position="1"/>
        <end position="564"/>
    </location>
</feature>
<feature type="repeat" description="HEAT 1">
    <location>
        <begin position="83"/>
        <end position="133"/>
    </location>
</feature>
<feature type="repeat" description="HEAT 2">
    <location>
        <begin position="138"/>
        <end position="177"/>
    </location>
</feature>
<feature type="repeat" description="ARM 1">
    <location>
        <begin position="179"/>
        <end position="229"/>
    </location>
</feature>
<feature type="repeat" description="ARM 2">
    <location>
        <begin position="230"/>
        <end position="276"/>
    </location>
</feature>
<feature type="repeat" description="ARM 3">
    <location>
        <begin position="277"/>
        <end position="326"/>
    </location>
</feature>
<feature type="repeat" description="ARM 4">
    <location>
        <begin position="328"/>
        <end position="366"/>
    </location>
</feature>
<feature type="repeat" description="ARM 5">
    <location>
        <begin position="367"/>
        <end position="411"/>
    </location>
</feature>
<feature type="region of interest" description="Disordered" evidence="2">
    <location>
        <begin position="1"/>
        <end position="56"/>
    </location>
</feature>
<feature type="coiled-coil region" evidence="1">
    <location>
        <begin position="465"/>
        <end position="528"/>
    </location>
</feature>
<feature type="compositionally biased region" description="Basic and acidic residues" evidence="2">
    <location>
        <begin position="9"/>
        <end position="20"/>
    </location>
</feature>
<feature type="compositionally biased region" description="Acidic residues" evidence="2">
    <location>
        <begin position="37"/>
        <end position="48"/>
    </location>
</feature>
<feature type="modified residue" description="Phosphoserine" evidence="4">
    <location>
        <position position="39"/>
    </location>
</feature>
<reference key="1">
    <citation type="journal article" date="2002" name="Nature">
        <title>The genome sequence of Schizosaccharomyces pombe.</title>
        <authorList>
            <person name="Wood V."/>
            <person name="Gwilliam R."/>
            <person name="Rajandream M.A."/>
            <person name="Lyne M.H."/>
            <person name="Lyne R."/>
            <person name="Stewart A."/>
            <person name="Sgouros J.G."/>
            <person name="Peat N."/>
            <person name="Hayles J."/>
            <person name="Baker S.G."/>
            <person name="Basham D."/>
            <person name="Bowman S."/>
            <person name="Brooks K."/>
            <person name="Brown D."/>
            <person name="Brown S."/>
            <person name="Chillingworth T."/>
            <person name="Churcher C.M."/>
            <person name="Collins M."/>
            <person name="Connor R."/>
            <person name="Cronin A."/>
            <person name="Davis P."/>
            <person name="Feltwell T."/>
            <person name="Fraser A."/>
            <person name="Gentles S."/>
            <person name="Goble A."/>
            <person name="Hamlin N."/>
            <person name="Harris D.E."/>
            <person name="Hidalgo J."/>
            <person name="Hodgson G."/>
            <person name="Holroyd S."/>
            <person name="Hornsby T."/>
            <person name="Howarth S."/>
            <person name="Huckle E.J."/>
            <person name="Hunt S."/>
            <person name="Jagels K."/>
            <person name="James K.D."/>
            <person name="Jones L."/>
            <person name="Jones M."/>
            <person name="Leather S."/>
            <person name="McDonald S."/>
            <person name="McLean J."/>
            <person name="Mooney P."/>
            <person name="Moule S."/>
            <person name="Mungall K.L."/>
            <person name="Murphy L.D."/>
            <person name="Niblett D."/>
            <person name="Odell C."/>
            <person name="Oliver K."/>
            <person name="O'Neil S."/>
            <person name="Pearson D."/>
            <person name="Quail M.A."/>
            <person name="Rabbinowitsch E."/>
            <person name="Rutherford K.M."/>
            <person name="Rutter S."/>
            <person name="Saunders D."/>
            <person name="Seeger K."/>
            <person name="Sharp S."/>
            <person name="Skelton J."/>
            <person name="Simmonds M.N."/>
            <person name="Squares R."/>
            <person name="Squares S."/>
            <person name="Stevens K."/>
            <person name="Taylor K."/>
            <person name="Taylor R.G."/>
            <person name="Tivey A."/>
            <person name="Walsh S.V."/>
            <person name="Warren T."/>
            <person name="Whitehead S."/>
            <person name="Woodward J.R."/>
            <person name="Volckaert G."/>
            <person name="Aert R."/>
            <person name="Robben J."/>
            <person name="Grymonprez B."/>
            <person name="Weltjens I."/>
            <person name="Vanstreels E."/>
            <person name="Rieger M."/>
            <person name="Schaefer M."/>
            <person name="Mueller-Auer S."/>
            <person name="Gabel C."/>
            <person name="Fuchs M."/>
            <person name="Duesterhoeft A."/>
            <person name="Fritzc C."/>
            <person name="Holzer E."/>
            <person name="Moestl D."/>
            <person name="Hilbert H."/>
            <person name="Borzym K."/>
            <person name="Langer I."/>
            <person name="Beck A."/>
            <person name="Lehrach H."/>
            <person name="Reinhardt R."/>
            <person name="Pohl T.M."/>
            <person name="Eger P."/>
            <person name="Zimmermann W."/>
            <person name="Wedler H."/>
            <person name="Wambutt R."/>
            <person name="Purnelle B."/>
            <person name="Goffeau A."/>
            <person name="Cadieu E."/>
            <person name="Dreano S."/>
            <person name="Gloux S."/>
            <person name="Lelaure V."/>
            <person name="Mottier S."/>
            <person name="Galibert F."/>
            <person name="Aves S.J."/>
            <person name="Xiang Z."/>
            <person name="Hunt C."/>
            <person name="Moore K."/>
            <person name="Hurst S.M."/>
            <person name="Lucas M."/>
            <person name="Rochet M."/>
            <person name="Gaillardin C."/>
            <person name="Tallada V.A."/>
            <person name="Garzon A."/>
            <person name="Thode G."/>
            <person name="Daga R.R."/>
            <person name="Cruzado L."/>
            <person name="Jimenez J."/>
            <person name="Sanchez M."/>
            <person name="del Rey F."/>
            <person name="Benito J."/>
            <person name="Dominguez A."/>
            <person name="Revuelta J.L."/>
            <person name="Moreno S."/>
            <person name="Armstrong J."/>
            <person name="Forsburg S.L."/>
            <person name="Cerutti L."/>
            <person name="Lowe T."/>
            <person name="McCombie W.R."/>
            <person name="Paulsen I."/>
            <person name="Potashkin J."/>
            <person name="Shpakovski G.V."/>
            <person name="Ussery D."/>
            <person name="Barrell B.G."/>
            <person name="Nurse P."/>
        </authorList>
    </citation>
    <scope>NUCLEOTIDE SEQUENCE [LARGE SCALE GENOMIC DNA]</scope>
    <source>
        <strain>972 / ATCC 24843</strain>
    </source>
</reference>
<reference key="2">
    <citation type="journal article" date="2006" name="Nat. Biotechnol.">
        <title>ORFeome cloning and global analysis of protein localization in the fission yeast Schizosaccharomyces pombe.</title>
        <authorList>
            <person name="Matsuyama A."/>
            <person name="Arai R."/>
            <person name="Yashiroda Y."/>
            <person name="Shirai A."/>
            <person name="Kamata A."/>
            <person name="Sekido S."/>
            <person name="Kobayashi Y."/>
            <person name="Hashimoto A."/>
            <person name="Hamamoto M."/>
            <person name="Hiraoka Y."/>
            <person name="Horinouchi S."/>
            <person name="Yoshida M."/>
        </authorList>
    </citation>
    <scope>SUBCELLULAR LOCATION [LARGE SCALE ANALYSIS]</scope>
</reference>
<reference key="3">
    <citation type="journal article" date="2008" name="J. Proteome Res.">
        <title>Phosphoproteome analysis of fission yeast.</title>
        <authorList>
            <person name="Wilson-Grady J.T."/>
            <person name="Villen J."/>
            <person name="Gygi S.P."/>
        </authorList>
    </citation>
    <scope>PHOSPHORYLATION [LARGE SCALE ANALYSIS] AT SER-39</scope>
    <scope>IDENTIFICATION BY MASS SPECTROMETRY</scope>
</reference>
<sequence length="564" mass="64590">MDVDSIFKNTEETNKKRNPEEADSLEPASSRRRLAEENSDEENEEFDEEGGRFFGSGLKKSEKTVLDFLDEQEAQEEPASLTPTELKRMVVRLEKTINNNQELRIKYSTSPQRFIESEADLDLEIRSFNVLSEYPILIPIFLKLDCVSTFLELMNHENADITITVLELLIELTDEDVDPDALNSLFTSLIDSGLLPLLSNTIKRFDESNEEDRHGVYCVLSLMENLLSVDNSICSIIVENTTLVEWLLSRSSVDETSISTNLQYAVEILAIILANSKEAKLKVCNLNGIDLLLRRISPYRLRDPTQGSEEEMMENVFDCLCSLVQETKGKSLFLKEEGIELCILNMKHKGKSRYSTIKVLDYLLFGPLSTPYCIRFVEAGGLKYIFAAFMKISAADTLEHILAILASLFRSLPADTVERVRFLRKFIENDFEKMKRLFKIYDRLRIQLKGIDQSRKLDFSPDSEEKSTKWFLQQIDHGLFPFQSTVLILSWLCVENTVTLKKIKMLFSEASIPIDELTDALKNYHENLEEPTVESEEVEANDSYYRIDEKPMVTVLLGSMQASV</sequence>
<comment type="function">
    <text evidence="1">Probable spliceosomal component involved in the activation of pre-mRNA splicing.</text>
</comment>
<comment type="subcellular location">
    <subcellularLocation>
        <location evidence="3">Nucleus</location>
    </subcellularLocation>
</comment>
<keyword id="KW-0175">Coiled coil</keyword>
<keyword id="KW-0507">mRNA processing</keyword>
<keyword id="KW-0508">mRNA splicing</keyword>
<keyword id="KW-0539">Nucleus</keyword>
<keyword id="KW-0597">Phosphoprotein</keyword>
<keyword id="KW-1185">Reference proteome</keyword>
<keyword id="KW-0677">Repeat</keyword>
<keyword id="KW-0747">Spliceosome</keyword>
<protein>
    <recommendedName>
        <fullName>Beta-catenin-like protein 1 homolog</fullName>
    </recommendedName>
</protein>